<feature type="chain" id="PRO_1000164016" description="Regulatory protein RecX">
    <location>
        <begin position="1"/>
        <end position="166"/>
    </location>
</feature>
<dbReference type="EMBL" id="CU928145">
    <property type="protein sequence ID" value="CAU98846.1"/>
    <property type="molecule type" value="Genomic_DNA"/>
</dbReference>
<dbReference type="RefSeq" id="WP_000140506.1">
    <property type="nucleotide sequence ID" value="NC_011748.1"/>
</dbReference>
<dbReference type="SMR" id="B7LEB0"/>
<dbReference type="GeneID" id="75172780"/>
<dbReference type="KEGG" id="eck:EC55989_2960"/>
<dbReference type="HOGENOM" id="CLU_066607_3_2_6"/>
<dbReference type="Proteomes" id="UP000000746">
    <property type="component" value="Chromosome"/>
</dbReference>
<dbReference type="GO" id="GO:0005737">
    <property type="term" value="C:cytoplasm"/>
    <property type="evidence" value="ECO:0007669"/>
    <property type="project" value="UniProtKB-SubCell"/>
</dbReference>
<dbReference type="GO" id="GO:0006282">
    <property type="term" value="P:regulation of DNA repair"/>
    <property type="evidence" value="ECO:0007669"/>
    <property type="project" value="UniProtKB-UniRule"/>
</dbReference>
<dbReference type="FunFam" id="1.10.10.10:FF:000133">
    <property type="entry name" value="Regulatory protein RecX"/>
    <property type="match status" value="1"/>
</dbReference>
<dbReference type="FunFam" id="1.10.10.10:FF:000134">
    <property type="entry name" value="Regulatory protein RecX"/>
    <property type="match status" value="1"/>
</dbReference>
<dbReference type="FunFam" id="1.10.10.10:FF:000209">
    <property type="entry name" value="Regulatory protein RecX"/>
    <property type="match status" value="1"/>
</dbReference>
<dbReference type="Gene3D" id="1.10.10.10">
    <property type="entry name" value="Winged helix-like DNA-binding domain superfamily/Winged helix DNA-binding domain"/>
    <property type="match status" value="3"/>
</dbReference>
<dbReference type="HAMAP" id="MF_01114">
    <property type="entry name" value="RecX"/>
    <property type="match status" value="1"/>
</dbReference>
<dbReference type="InterPro" id="IPR053926">
    <property type="entry name" value="RecX_HTH_1st"/>
</dbReference>
<dbReference type="InterPro" id="IPR053924">
    <property type="entry name" value="RecX_HTH_2nd"/>
</dbReference>
<dbReference type="InterPro" id="IPR053925">
    <property type="entry name" value="RecX_HTH_3rd"/>
</dbReference>
<dbReference type="InterPro" id="IPR003783">
    <property type="entry name" value="Regulatory_RecX"/>
</dbReference>
<dbReference type="InterPro" id="IPR036388">
    <property type="entry name" value="WH-like_DNA-bd_sf"/>
</dbReference>
<dbReference type="NCBIfam" id="NF001052">
    <property type="entry name" value="PRK00117.1-1"/>
    <property type="match status" value="1"/>
</dbReference>
<dbReference type="PANTHER" id="PTHR33602">
    <property type="entry name" value="REGULATORY PROTEIN RECX FAMILY PROTEIN"/>
    <property type="match status" value="1"/>
</dbReference>
<dbReference type="PANTHER" id="PTHR33602:SF1">
    <property type="entry name" value="REGULATORY PROTEIN RECX FAMILY PROTEIN"/>
    <property type="match status" value="1"/>
</dbReference>
<dbReference type="Pfam" id="PF21982">
    <property type="entry name" value="RecX_HTH1"/>
    <property type="match status" value="1"/>
</dbReference>
<dbReference type="Pfam" id="PF02631">
    <property type="entry name" value="RecX_HTH2"/>
    <property type="match status" value="1"/>
</dbReference>
<dbReference type="Pfam" id="PF21981">
    <property type="entry name" value="RecX_HTH3"/>
    <property type="match status" value="1"/>
</dbReference>
<reference key="1">
    <citation type="journal article" date="2009" name="PLoS Genet.">
        <title>Organised genome dynamics in the Escherichia coli species results in highly diverse adaptive paths.</title>
        <authorList>
            <person name="Touchon M."/>
            <person name="Hoede C."/>
            <person name="Tenaillon O."/>
            <person name="Barbe V."/>
            <person name="Baeriswyl S."/>
            <person name="Bidet P."/>
            <person name="Bingen E."/>
            <person name="Bonacorsi S."/>
            <person name="Bouchier C."/>
            <person name="Bouvet O."/>
            <person name="Calteau A."/>
            <person name="Chiapello H."/>
            <person name="Clermont O."/>
            <person name="Cruveiller S."/>
            <person name="Danchin A."/>
            <person name="Diard M."/>
            <person name="Dossat C."/>
            <person name="Karoui M.E."/>
            <person name="Frapy E."/>
            <person name="Garry L."/>
            <person name="Ghigo J.M."/>
            <person name="Gilles A.M."/>
            <person name="Johnson J."/>
            <person name="Le Bouguenec C."/>
            <person name="Lescat M."/>
            <person name="Mangenot S."/>
            <person name="Martinez-Jehanne V."/>
            <person name="Matic I."/>
            <person name="Nassif X."/>
            <person name="Oztas S."/>
            <person name="Petit M.A."/>
            <person name="Pichon C."/>
            <person name="Rouy Z."/>
            <person name="Ruf C.S."/>
            <person name="Schneider D."/>
            <person name="Tourret J."/>
            <person name="Vacherie B."/>
            <person name="Vallenet D."/>
            <person name="Medigue C."/>
            <person name="Rocha E.P.C."/>
            <person name="Denamur E."/>
        </authorList>
    </citation>
    <scope>NUCLEOTIDE SEQUENCE [LARGE SCALE GENOMIC DNA]</scope>
    <source>
        <strain>55989 / EAEC</strain>
    </source>
</reference>
<keyword id="KW-0963">Cytoplasm</keyword>
<keyword id="KW-1185">Reference proteome</keyword>
<protein>
    <recommendedName>
        <fullName evidence="1">Regulatory protein RecX</fullName>
    </recommendedName>
</protein>
<gene>
    <name evidence="1" type="primary">recX</name>
    <name type="ordered locus">EC55989_2960</name>
</gene>
<name>RECX_ECO55</name>
<proteinExistence type="inferred from homology"/>
<comment type="function">
    <text evidence="1">Modulates RecA activity.</text>
</comment>
<comment type="subcellular location">
    <subcellularLocation>
        <location evidence="1">Cytoplasm</location>
    </subcellularLocation>
</comment>
<comment type="similarity">
    <text evidence="1">Belongs to the RecX family.</text>
</comment>
<sequence length="166" mass="19410">MTESTSRRPAYARLLDRAVRILAVRDHSEQELRRKLAAPIMGKNGPEEIDATAEDYERVIAWCHEHGYLDDSRFVARFIASRSRKGYGPARIRQELNQKGISREATEKAMRECDIDWCALARDQATRKYGEPLPTVFSEKVKIQRFLLYRGYLMEDIQDIWRNFAD</sequence>
<evidence type="ECO:0000255" key="1">
    <source>
        <dbReference type="HAMAP-Rule" id="MF_01114"/>
    </source>
</evidence>
<accession>B7LEB0</accession>
<organism>
    <name type="scientific">Escherichia coli (strain 55989 / EAEC)</name>
    <dbReference type="NCBI Taxonomy" id="585055"/>
    <lineage>
        <taxon>Bacteria</taxon>
        <taxon>Pseudomonadati</taxon>
        <taxon>Pseudomonadota</taxon>
        <taxon>Gammaproteobacteria</taxon>
        <taxon>Enterobacterales</taxon>
        <taxon>Enterobacteriaceae</taxon>
        <taxon>Escherichia</taxon>
    </lineage>
</organism>